<accession>Q87V01</accession>
<sequence length="176" mass="18826">MTTIVSVRRHGKVVMAGDGQVSLGNTVMKGNAKKVRRLYHGEVIAGFAGATADAFTLFERFEAQLEKHQGHLVRAAVELAKDWRTDRSLSRLEAMLAVANKDASLIITGNGDVVEPEDGLIAMGSGGAFAQAAARALLLKTDLSAREIAETSLHIAGDICVFTNHNITIEEQDLAD</sequence>
<dbReference type="EC" id="3.4.25.2" evidence="2"/>
<dbReference type="EMBL" id="AE016853">
    <property type="protein sequence ID" value="AAO58567.1"/>
    <property type="molecule type" value="Genomic_DNA"/>
</dbReference>
<dbReference type="RefSeq" id="NP_794872.1">
    <property type="nucleotide sequence ID" value="NC_004578.1"/>
</dbReference>
<dbReference type="RefSeq" id="WP_003378861.1">
    <property type="nucleotide sequence ID" value="NC_004578.1"/>
</dbReference>
<dbReference type="SMR" id="Q87V01"/>
<dbReference type="STRING" id="223283.PSPTO_5140"/>
<dbReference type="MEROPS" id="T01.006"/>
<dbReference type="GeneID" id="61789643"/>
<dbReference type="KEGG" id="pst:PSPTO_5140"/>
<dbReference type="PATRIC" id="fig|223283.9.peg.5260"/>
<dbReference type="eggNOG" id="COG5405">
    <property type="taxonomic scope" value="Bacteria"/>
</dbReference>
<dbReference type="HOGENOM" id="CLU_093872_1_0_6"/>
<dbReference type="OrthoDB" id="9804884at2"/>
<dbReference type="PhylomeDB" id="Q87V01"/>
<dbReference type="Proteomes" id="UP000002515">
    <property type="component" value="Chromosome"/>
</dbReference>
<dbReference type="GO" id="GO:0009376">
    <property type="term" value="C:HslUV protease complex"/>
    <property type="evidence" value="ECO:0007669"/>
    <property type="project" value="UniProtKB-UniRule"/>
</dbReference>
<dbReference type="GO" id="GO:0005839">
    <property type="term" value="C:proteasome core complex"/>
    <property type="evidence" value="ECO:0007669"/>
    <property type="project" value="InterPro"/>
</dbReference>
<dbReference type="GO" id="GO:0046872">
    <property type="term" value="F:metal ion binding"/>
    <property type="evidence" value="ECO:0007669"/>
    <property type="project" value="UniProtKB-KW"/>
</dbReference>
<dbReference type="GO" id="GO:0004298">
    <property type="term" value="F:threonine-type endopeptidase activity"/>
    <property type="evidence" value="ECO:0007669"/>
    <property type="project" value="UniProtKB-KW"/>
</dbReference>
<dbReference type="GO" id="GO:0051603">
    <property type="term" value="P:proteolysis involved in protein catabolic process"/>
    <property type="evidence" value="ECO:0007669"/>
    <property type="project" value="InterPro"/>
</dbReference>
<dbReference type="CDD" id="cd01913">
    <property type="entry name" value="protease_HslV"/>
    <property type="match status" value="1"/>
</dbReference>
<dbReference type="FunFam" id="3.60.20.10:FF:000002">
    <property type="entry name" value="ATP-dependent protease subunit HslV"/>
    <property type="match status" value="1"/>
</dbReference>
<dbReference type="Gene3D" id="3.60.20.10">
    <property type="entry name" value="Glutamine Phosphoribosylpyrophosphate, subunit 1, domain 1"/>
    <property type="match status" value="1"/>
</dbReference>
<dbReference type="HAMAP" id="MF_00248">
    <property type="entry name" value="HslV"/>
    <property type="match status" value="1"/>
</dbReference>
<dbReference type="InterPro" id="IPR022281">
    <property type="entry name" value="ATP-dep_Prtase_HsIV_su"/>
</dbReference>
<dbReference type="InterPro" id="IPR029055">
    <property type="entry name" value="Ntn_hydrolases_N"/>
</dbReference>
<dbReference type="InterPro" id="IPR001353">
    <property type="entry name" value="Proteasome_sua/b"/>
</dbReference>
<dbReference type="InterPro" id="IPR023333">
    <property type="entry name" value="Proteasome_suB-type"/>
</dbReference>
<dbReference type="NCBIfam" id="TIGR03692">
    <property type="entry name" value="ATP_dep_HslV"/>
    <property type="match status" value="1"/>
</dbReference>
<dbReference type="NCBIfam" id="NF003964">
    <property type="entry name" value="PRK05456.1"/>
    <property type="match status" value="1"/>
</dbReference>
<dbReference type="PANTHER" id="PTHR32194:SF0">
    <property type="entry name" value="ATP-DEPENDENT PROTEASE SUBUNIT HSLV"/>
    <property type="match status" value="1"/>
</dbReference>
<dbReference type="PANTHER" id="PTHR32194">
    <property type="entry name" value="METALLOPROTEASE TLDD"/>
    <property type="match status" value="1"/>
</dbReference>
<dbReference type="Pfam" id="PF00227">
    <property type="entry name" value="Proteasome"/>
    <property type="match status" value="1"/>
</dbReference>
<dbReference type="PIRSF" id="PIRSF039093">
    <property type="entry name" value="HslV"/>
    <property type="match status" value="1"/>
</dbReference>
<dbReference type="SUPFAM" id="SSF56235">
    <property type="entry name" value="N-terminal nucleophile aminohydrolases (Ntn hydrolases)"/>
    <property type="match status" value="1"/>
</dbReference>
<dbReference type="PROSITE" id="PS51476">
    <property type="entry name" value="PROTEASOME_BETA_2"/>
    <property type="match status" value="1"/>
</dbReference>
<organism>
    <name type="scientific">Pseudomonas syringae pv. tomato (strain ATCC BAA-871 / DC3000)</name>
    <dbReference type="NCBI Taxonomy" id="223283"/>
    <lineage>
        <taxon>Bacteria</taxon>
        <taxon>Pseudomonadati</taxon>
        <taxon>Pseudomonadota</taxon>
        <taxon>Gammaproteobacteria</taxon>
        <taxon>Pseudomonadales</taxon>
        <taxon>Pseudomonadaceae</taxon>
        <taxon>Pseudomonas</taxon>
    </lineage>
</organism>
<protein>
    <recommendedName>
        <fullName evidence="2">ATP-dependent protease subunit HslV</fullName>
        <ecNumber evidence="2">3.4.25.2</ecNumber>
    </recommendedName>
</protein>
<keyword id="KW-0021">Allosteric enzyme</keyword>
<keyword id="KW-0963">Cytoplasm</keyword>
<keyword id="KW-0378">Hydrolase</keyword>
<keyword id="KW-0479">Metal-binding</keyword>
<keyword id="KW-0645">Protease</keyword>
<keyword id="KW-1185">Reference proteome</keyword>
<keyword id="KW-0915">Sodium</keyword>
<keyword id="KW-0888">Threonine protease</keyword>
<gene>
    <name evidence="2" type="primary">hslV</name>
    <name type="ordered locus">PSPTO_5140</name>
</gene>
<feature type="initiator methionine" description="Removed" evidence="1">
    <location>
        <position position="1"/>
    </location>
</feature>
<feature type="chain" id="PRO_0000148134" description="ATP-dependent protease subunit HslV">
    <location>
        <begin position="2"/>
        <end position="176"/>
    </location>
</feature>
<feature type="active site" evidence="2">
    <location>
        <position position="2"/>
    </location>
</feature>
<feature type="binding site" evidence="2">
    <location>
        <position position="157"/>
    </location>
    <ligand>
        <name>Na(+)</name>
        <dbReference type="ChEBI" id="CHEBI:29101"/>
    </ligand>
</feature>
<feature type="binding site" evidence="2">
    <location>
        <position position="160"/>
    </location>
    <ligand>
        <name>Na(+)</name>
        <dbReference type="ChEBI" id="CHEBI:29101"/>
    </ligand>
</feature>
<feature type="binding site" evidence="2">
    <location>
        <position position="163"/>
    </location>
    <ligand>
        <name>Na(+)</name>
        <dbReference type="ChEBI" id="CHEBI:29101"/>
    </ligand>
</feature>
<name>HSLV_PSESM</name>
<reference key="1">
    <citation type="journal article" date="2003" name="Proc. Natl. Acad. Sci. U.S.A.">
        <title>The complete genome sequence of the Arabidopsis and tomato pathogen Pseudomonas syringae pv. tomato DC3000.</title>
        <authorList>
            <person name="Buell C.R."/>
            <person name="Joardar V."/>
            <person name="Lindeberg M."/>
            <person name="Selengut J."/>
            <person name="Paulsen I.T."/>
            <person name="Gwinn M.L."/>
            <person name="Dodson R.J."/>
            <person name="DeBoy R.T."/>
            <person name="Durkin A.S."/>
            <person name="Kolonay J.F."/>
            <person name="Madupu R."/>
            <person name="Daugherty S.C."/>
            <person name="Brinkac L.M."/>
            <person name="Beanan M.J."/>
            <person name="Haft D.H."/>
            <person name="Nelson W.C."/>
            <person name="Davidsen T.M."/>
            <person name="Zafar N."/>
            <person name="Zhou L."/>
            <person name="Liu J."/>
            <person name="Yuan Q."/>
            <person name="Khouri H.M."/>
            <person name="Fedorova N.B."/>
            <person name="Tran B."/>
            <person name="Russell D."/>
            <person name="Berry K.J."/>
            <person name="Utterback T.R."/>
            <person name="Van Aken S.E."/>
            <person name="Feldblyum T.V."/>
            <person name="D'Ascenzo M."/>
            <person name="Deng W.-L."/>
            <person name="Ramos A.R."/>
            <person name="Alfano J.R."/>
            <person name="Cartinhour S."/>
            <person name="Chatterjee A.K."/>
            <person name="Delaney T.P."/>
            <person name="Lazarowitz S.G."/>
            <person name="Martin G.B."/>
            <person name="Schneider D.J."/>
            <person name="Tang X."/>
            <person name="Bender C.L."/>
            <person name="White O."/>
            <person name="Fraser C.M."/>
            <person name="Collmer A."/>
        </authorList>
    </citation>
    <scope>NUCLEOTIDE SEQUENCE [LARGE SCALE GENOMIC DNA]</scope>
    <source>
        <strain>ATCC BAA-871 / DC3000</strain>
    </source>
</reference>
<evidence type="ECO:0000250" key="1"/>
<evidence type="ECO:0000255" key="2">
    <source>
        <dbReference type="HAMAP-Rule" id="MF_00248"/>
    </source>
</evidence>
<proteinExistence type="inferred from homology"/>
<comment type="function">
    <text evidence="2">Protease subunit of a proteasome-like degradation complex believed to be a general protein degrading machinery.</text>
</comment>
<comment type="catalytic activity">
    <reaction evidence="2">
        <text>ATP-dependent cleavage of peptide bonds with broad specificity.</text>
        <dbReference type="EC" id="3.4.25.2"/>
    </reaction>
</comment>
<comment type="activity regulation">
    <text evidence="2">Allosterically activated by HslU binding.</text>
</comment>
<comment type="subunit">
    <text evidence="2">A double ring-shaped homohexamer of HslV is capped on each side by a ring-shaped HslU homohexamer. The assembly of the HslU/HslV complex is dependent on binding of ATP.</text>
</comment>
<comment type="subcellular location">
    <subcellularLocation>
        <location evidence="2">Cytoplasm</location>
    </subcellularLocation>
</comment>
<comment type="similarity">
    <text evidence="2">Belongs to the peptidase T1B family. HslV subfamily.</text>
</comment>